<evidence type="ECO:0000250" key="1"/>
<evidence type="ECO:0000255" key="2"/>
<evidence type="ECO:0000256" key="3">
    <source>
        <dbReference type="SAM" id="MobiDB-lite"/>
    </source>
</evidence>
<evidence type="ECO:0000269" key="4">
    <source>
    </source>
</evidence>
<evidence type="ECO:0000269" key="5">
    <source>
    </source>
</evidence>
<evidence type="ECO:0000269" key="6">
    <source>
    </source>
</evidence>
<evidence type="ECO:0000303" key="7">
    <source>
    </source>
</evidence>
<evidence type="ECO:0000305" key="8"/>
<protein>
    <recommendedName>
        <fullName>Popeye domain-containing protein 1-A</fullName>
        <shortName>Popeye protein 1-A</shortName>
        <shortName>Xpop-1-A</shortName>
    </recommendedName>
    <alternativeName>
        <fullName>Blood vessel epicardial substance-A</fullName>
        <shortName>Xbves-A</shortName>
    </alternativeName>
</protein>
<reference key="1">
    <citation type="journal article" date="2002" name="Mech. Dev.">
        <title>Cardiac specific expression of Xenopus Popeye-1.</title>
        <authorList>
            <person name="Hitz M.P."/>
            <person name="Pandur P."/>
            <person name="Brand T."/>
            <person name="Kuhl M."/>
        </authorList>
    </citation>
    <scope>NUCLEOTIDE SEQUENCE [MRNA] (ISOFORM 2)</scope>
    <scope>TISSUE SPECIFICITY</scope>
    <scope>DEVELOPMENTAL STAGE</scope>
    <source>
        <tissue>Heart</tissue>
    </source>
</reference>
<reference key="2">
    <citation type="submission" date="2002-07" db="EMBL/GenBank/DDBJ databases">
        <title>Xenopus bves serves a novel function in the early embryo.</title>
        <authorList>
            <person name="Nesset A.L."/>
            <person name="Bader D.M."/>
        </authorList>
    </citation>
    <scope>NUCLEOTIDE SEQUENCE [MRNA] (ISOFORM 1)</scope>
</reference>
<reference key="3">
    <citation type="submission" date="2004-07" db="EMBL/GenBank/DDBJ databases">
        <authorList>
            <consortium name="NIH - Xenopus Gene Collection (XGC) project"/>
        </authorList>
    </citation>
    <scope>NUCLEOTIDE SEQUENCE [LARGE SCALE MRNA] (ISOFORM 1)</scope>
    <source>
        <tissue>Oocyte</tissue>
    </source>
</reference>
<reference key="4">
    <citation type="journal article" date="2006" name="Proc. Natl. Acad. Sci. U.S.A.">
        <title>Xbves is a regulator of epithelial movement during early Xenopus laevis development.</title>
        <authorList>
            <person name="Ripley A.N."/>
            <person name="Osler M.E."/>
            <person name="Wright C.V."/>
            <person name="Bader D."/>
        </authorList>
    </citation>
    <scope>FUNCTION</scope>
    <scope>DEVELOPMENTAL STAGE</scope>
</reference>
<reference key="5">
    <citation type="journal article" date="2010" name="EMBO J.">
        <title>Identification of a novel Bves function: regulation of vesicular transport.</title>
        <authorList>
            <person name="Hager H.A."/>
            <person name="Roberts R.J."/>
            <person name="Cross E.E."/>
            <person name="Proux-Gillardeaux V."/>
            <person name="Bader D.M."/>
        </authorList>
    </citation>
    <scope>FUNCTION</scope>
</reference>
<keyword id="KW-0025">Alternative splicing</keyword>
<keyword id="KW-0130">Cell adhesion</keyword>
<keyword id="KW-0965">Cell junction</keyword>
<keyword id="KW-1003">Cell membrane</keyword>
<keyword id="KW-0217">Developmental protein</keyword>
<keyword id="KW-0325">Glycoprotein</keyword>
<keyword id="KW-0472">Membrane</keyword>
<keyword id="KW-1185">Reference proteome</keyword>
<keyword id="KW-0796">Tight junction</keyword>
<keyword id="KW-0812">Transmembrane</keyword>
<keyword id="KW-1133">Transmembrane helix</keyword>
<organism>
    <name type="scientific">Xenopus laevis</name>
    <name type="common">African clawed frog</name>
    <dbReference type="NCBI Taxonomy" id="8355"/>
    <lineage>
        <taxon>Eukaryota</taxon>
        <taxon>Metazoa</taxon>
        <taxon>Chordata</taxon>
        <taxon>Craniata</taxon>
        <taxon>Vertebrata</taxon>
        <taxon>Euteleostomi</taxon>
        <taxon>Amphibia</taxon>
        <taxon>Batrachia</taxon>
        <taxon>Anura</taxon>
        <taxon>Pipoidea</taxon>
        <taxon>Pipidae</taxon>
        <taxon>Xenopodinae</taxon>
        <taxon>Xenopus</taxon>
        <taxon>Xenopus</taxon>
    </lineage>
</organism>
<feature type="chain" id="PRO_0000394480" description="Popeye domain-containing protein 1-A">
    <location>
        <begin position="1"/>
        <end position="338"/>
    </location>
</feature>
<feature type="topological domain" description="Extracellular" evidence="2">
    <location>
        <begin position="1"/>
        <end position="40"/>
    </location>
</feature>
<feature type="transmembrane region" description="Helical" evidence="2">
    <location>
        <begin position="41"/>
        <end position="61"/>
    </location>
</feature>
<feature type="topological domain" description="Cytoplasmic" evidence="2">
    <location>
        <begin position="62"/>
        <end position="65"/>
    </location>
</feature>
<feature type="transmembrane region" description="Helical" evidence="2">
    <location>
        <begin position="66"/>
        <end position="86"/>
    </location>
</feature>
<feature type="topological domain" description="Extracellular" evidence="2">
    <location>
        <begin position="87"/>
        <end position="91"/>
    </location>
</feature>
<feature type="transmembrane region" description="Helical" evidence="2">
    <location>
        <begin position="92"/>
        <end position="112"/>
    </location>
</feature>
<feature type="topological domain" description="Cytoplasmic" evidence="2">
    <location>
        <begin position="113"/>
        <end position="338"/>
    </location>
</feature>
<feature type="region of interest" description="Disordered" evidence="3">
    <location>
        <begin position="296"/>
        <end position="317"/>
    </location>
</feature>
<feature type="compositionally biased region" description="Polar residues" evidence="3">
    <location>
        <begin position="307"/>
        <end position="317"/>
    </location>
</feature>
<feature type="glycosylation site" description="N-linked (GlcNAc...) asparagine" evidence="2">
    <location>
        <position position="21"/>
    </location>
</feature>
<feature type="glycosylation site" description="N-linked (GlcNAc...) asparagine" evidence="2">
    <location>
        <position position="29"/>
    </location>
</feature>
<feature type="splice variant" id="VSP_039270" description="In isoform 2." evidence="7">
    <location>
        <begin position="1"/>
        <end position="12"/>
    </location>
</feature>
<feature type="sequence conflict" description="In Ref. 1; AAM54132." evidence="8" ref="1">
    <original>R</original>
    <variation>H</variation>
    <location>
        <position position="210"/>
    </location>
</feature>
<feature type="sequence conflict" description="In Ref. 3; AAH76833." evidence="8" ref="3">
    <original>A</original>
    <variation>S</variation>
    <location>
        <position position="326"/>
    </location>
</feature>
<sequence length="338" mass="39025">MTTESIFITTLPMDFNSQFDNITIGLNDNETLCENWREIHHLVFHLANTCFAAGLVIPSTLNLHMLFLRGMLCLGCTFFIIWAVLFRCALDIMIWNATFLSINFMHFVYLVYKKRPIKIKKELKGIYHRMFEPLHVSPELFNRLTGQFCEIKTLAKGQTYAVEDKTSVDDRLSILLKGIMKVSYRGHFLHTISANAYIDSPEFRSTEMNRGETFQVTITADDNCVFLCWSRERLTYFLESEPFLYEIFKYLIGKDITTKLYSLNDPTLGKKRKLDTQPSLCSQLSVMEMRNSLASTNDNEDGLQNFLRGTSTTSSQRNKQQEFYNAYGVGPLSHAVFC</sequence>
<dbReference type="EMBL" id="AF461429">
    <property type="protein sequence ID" value="AAM54132.1"/>
    <property type="molecule type" value="mRNA"/>
</dbReference>
<dbReference type="EMBL" id="AF527799">
    <property type="protein sequence ID" value="AAM90308.1"/>
    <property type="molecule type" value="mRNA"/>
</dbReference>
<dbReference type="EMBL" id="BC076833">
    <property type="protein sequence ID" value="AAH76833.1"/>
    <property type="molecule type" value="mRNA"/>
</dbReference>
<dbReference type="RefSeq" id="NP_001081141.1">
    <molecule id="Q8JH92-1"/>
    <property type="nucleotide sequence ID" value="NM_001087672.1"/>
</dbReference>
<dbReference type="SMR" id="Q8JH92"/>
<dbReference type="GlyCosmos" id="Q8JH92">
    <property type="glycosylation" value="2 sites, No reported glycans"/>
</dbReference>
<dbReference type="DNASU" id="394408"/>
<dbReference type="GeneID" id="394408"/>
<dbReference type="KEGG" id="xla:394408"/>
<dbReference type="AGR" id="Xenbase:XB-GENE-6254222"/>
<dbReference type="CTD" id="394408"/>
<dbReference type="Xenbase" id="XB-GENE-6254222">
    <property type="gene designation" value="popdc1.L"/>
</dbReference>
<dbReference type="OrthoDB" id="425611at2759"/>
<dbReference type="Proteomes" id="UP000186698">
    <property type="component" value="Chromosome 5L"/>
</dbReference>
<dbReference type="Bgee" id="394408">
    <property type="expression patterns" value="Expressed in heart and 14 other cell types or tissues"/>
</dbReference>
<dbReference type="GO" id="GO:0005923">
    <property type="term" value="C:bicellular tight junction"/>
    <property type="evidence" value="ECO:0000250"/>
    <property type="project" value="UniProtKB"/>
</dbReference>
<dbReference type="GO" id="GO:0016328">
    <property type="term" value="C:lateral plasma membrane"/>
    <property type="evidence" value="ECO:0000250"/>
    <property type="project" value="UniProtKB"/>
</dbReference>
<dbReference type="GO" id="GO:0016020">
    <property type="term" value="C:membrane"/>
    <property type="evidence" value="ECO:0000250"/>
    <property type="project" value="UniProtKB"/>
</dbReference>
<dbReference type="GO" id="GO:0005886">
    <property type="term" value="C:plasma membrane"/>
    <property type="evidence" value="ECO:0000250"/>
    <property type="project" value="UniProtKB"/>
</dbReference>
<dbReference type="GO" id="GO:0042383">
    <property type="term" value="C:sarcolemma"/>
    <property type="evidence" value="ECO:0000318"/>
    <property type="project" value="GO_Central"/>
</dbReference>
<dbReference type="GO" id="GO:0030552">
    <property type="term" value="F:cAMP binding"/>
    <property type="evidence" value="ECO:0000318"/>
    <property type="project" value="GO_Central"/>
</dbReference>
<dbReference type="GO" id="GO:0005198">
    <property type="term" value="F:structural molecule activity"/>
    <property type="evidence" value="ECO:0000250"/>
    <property type="project" value="UniProtKB"/>
</dbReference>
<dbReference type="GO" id="GO:0090136">
    <property type="term" value="P:epithelial cell-cell adhesion"/>
    <property type="evidence" value="ECO:0000250"/>
    <property type="project" value="UniProtKB"/>
</dbReference>
<dbReference type="GO" id="GO:0007507">
    <property type="term" value="P:heart development"/>
    <property type="evidence" value="ECO:0000318"/>
    <property type="project" value="GO_Central"/>
</dbReference>
<dbReference type="GO" id="GO:0040017">
    <property type="term" value="P:positive regulation of locomotion"/>
    <property type="evidence" value="ECO:0000250"/>
    <property type="project" value="UniProtKB"/>
</dbReference>
<dbReference type="GO" id="GO:0001921">
    <property type="term" value="P:positive regulation of receptor recycling"/>
    <property type="evidence" value="ECO:0000314"/>
    <property type="project" value="UniProtKB"/>
</dbReference>
<dbReference type="GO" id="GO:0008360">
    <property type="term" value="P:regulation of cell shape"/>
    <property type="evidence" value="ECO:0000250"/>
    <property type="project" value="UniProtKB"/>
</dbReference>
<dbReference type="GO" id="GO:0070587">
    <property type="term" value="P:regulation of cell-cell adhesion involved in gastrulation"/>
    <property type="evidence" value="ECO:0000314"/>
    <property type="project" value="UniProtKB"/>
</dbReference>
<dbReference type="GO" id="GO:0043087">
    <property type="term" value="P:regulation of GTPase activity"/>
    <property type="evidence" value="ECO:0000250"/>
    <property type="project" value="UniProtKB"/>
</dbReference>
<dbReference type="GO" id="GO:0042391">
    <property type="term" value="P:regulation of membrane potential"/>
    <property type="evidence" value="ECO:0000318"/>
    <property type="project" value="GO_Central"/>
</dbReference>
<dbReference type="GO" id="GO:0007519">
    <property type="term" value="P:skeletal muscle tissue development"/>
    <property type="evidence" value="ECO:0000318"/>
    <property type="project" value="GO_Central"/>
</dbReference>
<dbReference type="GO" id="GO:0051146">
    <property type="term" value="P:striated muscle cell differentiation"/>
    <property type="evidence" value="ECO:0000318"/>
    <property type="project" value="GO_Central"/>
</dbReference>
<dbReference type="GO" id="GO:0034446">
    <property type="term" value="P:substrate adhesion-dependent cell spreading"/>
    <property type="evidence" value="ECO:0000250"/>
    <property type="project" value="UniProtKB"/>
</dbReference>
<dbReference type="GO" id="GO:0016192">
    <property type="term" value="P:vesicle-mediated transport"/>
    <property type="evidence" value="ECO:0000314"/>
    <property type="project" value="UniProtKB"/>
</dbReference>
<dbReference type="FunFam" id="2.60.120.10:FF:000166">
    <property type="entry name" value="blood vessel epicardial substance isoform X1"/>
    <property type="match status" value="1"/>
</dbReference>
<dbReference type="Gene3D" id="2.60.120.10">
    <property type="entry name" value="Jelly Rolls"/>
    <property type="match status" value="1"/>
</dbReference>
<dbReference type="InterPro" id="IPR018490">
    <property type="entry name" value="cNMP-bd_dom_sf"/>
</dbReference>
<dbReference type="InterPro" id="IPR006916">
    <property type="entry name" value="POPDC1-3"/>
</dbReference>
<dbReference type="InterPro" id="IPR055272">
    <property type="entry name" value="POPDC1-3_dom"/>
</dbReference>
<dbReference type="InterPro" id="IPR014710">
    <property type="entry name" value="RmlC-like_jellyroll"/>
</dbReference>
<dbReference type="PANTHER" id="PTHR12101:SF17">
    <property type="entry name" value="BLOOD VESSEL EPICARDIAL SUBSTANCE"/>
    <property type="match status" value="1"/>
</dbReference>
<dbReference type="PANTHER" id="PTHR12101">
    <property type="entry name" value="POPEYE DOMAIN CONTAINING PROTEIN"/>
    <property type="match status" value="1"/>
</dbReference>
<dbReference type="Pfam" id="PF04831">
    <property type="entry name" value="POPDC1-3"/>
    <property type="match status" value="1"/>
</dbReference>
<dbReference type="SUPFAM" id="SSF51206">
    <property type="entry name" value="cAMP-binding domain-like"/>
    <property type="match status" value="1"/>
</dbReference>
<comment type="function">
    <text evidence="5 6">Cell adhesion molecule involved in the establishment and/or maintenance of cell integrity. Plays a role in vamp3-mediated vesicular transport and recycling of different receptor molecules. May be involved in the formation and regulation of the tight junction (TJ) paracellular permeability barrier in epithelial cells. May induce primordial adhesive contact and aggregation of epithelial cells in a Ca(2+)-independent manner. May be involved in epithelial movement during corneal sheet formation and regeneration. May play a role in the regulation of cell shape and movement by modulating the Rho-GTPase activity. May also be involved in striated muscle regeneration and in the regulation of cell spreading.</text>
</comment>
<comment type="subcellular location">
    <subcellularLocation>
        <location evidence="1">Lateral cell membrane</location>
    </subcellularLocation>
    <subcellularLocation>
        <location evidence="1">Cell junction</location>
        <location evidence="1">Tight junction</location>
    </subcellularLocation>
    <subcellularLocation>
        <location evidence="8">Membrane</location>
        <topology evidence="8">Multi-pass membrane protein</topology>
    </subcellularLocation>
    <text>Detected at points of cell-cell contact in confluent epithelial sheets. Colocalizes with components of the adherens and tight junctions.</text>
</comment>
<comment type="alternative products">
    <event type="alternative splicing"/>
    <isoform>
        <id>Q8JH92-1</id>
        <name>1</name>
        <sequence type="displayed"/>
    </isoform>
    <isoform>
        <id>Q8JH92-2</id>
        <name>2</name>
        <sequence type="described" ref="VSP_039270"/>
    </isoform>
</comment>
<comment type="tissue specificity">
    <text evidence="4">Expressed in the heart.</text>
</comment>
<comment type="developmental stage">
    <text evidence="4 5">Expressed in epithelia cells during gastrulation (at protein level). Expressed in oocyte, cleavage, gastrulation, and neurulation stage embryos. Expression decreases by the end of gastrulation at stage 12. Weakly expressed during neurula at stage 16. Strongly expressed at stage 31 and remains at a robust level through early tadpole stages. Expressed in heart, somites, cement gland and eyes at stage 35. Expressed in the embryonic heart from stage 31 through 41 in the outer curvature of the ventricle and atrial regions.</text>
</comment>
<comment type="similarity">
    <text evidence="8">Belongs to the popeye family.</text>
</comment>
<accession>Q8JH92</accession>
<accession>Q6DFA7</accession>
<accession>Q8JHW3</accession>
<name>PPD1A_XENLA</name>
<proteinExistence type="evidence at protein level"/>
<gene>
    <name type="primary">popdc1-a</name>
    <name type="synonym">bves-a</name>
    <name type="synonym">pop1-a</name>
</gene>